<sequence>MDVDNGEGQVQVHLKTKQEQYAVPDVPYAIDGTVTTVELNTFVNALLRQKDGSSDTDFDFLVFDEYLRGRLCDHLREKAISFEDAIEIEYVERFPAPEPQDCLLHDDWVSAVKARGKWILSGCYDNSLNLWTNKGKHILTISGHTAPIKAVDWISLDEETGRFVSTSQDQTAMLWKWNVGSNAVDCVSVCKGHERGVDSVSVSPDGLRFATGSWDTMLKVWSAELDDGVEGSSKRMKESGVRTPKITLQGHRESVSAVQWMDATTLLTGSWDYTLKVWDLSLEGIKTEISTNKSIFDASYSKLNRLILTASADKNLRLYDPRTNQGSVVRNTYLGHNAWVQTVMWSTTEEFLFVSGAYDNQNKLWDCRSPKAPLYDLLGHGDKVLDIDWSNPKYIVSGGVDNTVRVFKSRKALAEDTETK</sequence>
<dbReference type="EMBL" id="CH480818">
    <property type="protein sequence ID" value="EDW52501.1"/>
    <property type="molecule type" value="Genomic_DNA"/>
</dbReference>
<dbReference type="SMR" id="B4HWV6"/>
<dbReference type="STRING" id="7238.B4HWV6"/>
<dbReference type="EnsemblMetazoa" id="FBtr0194431">
    <property type="protein sequence ID" value="FBpp0192923"/>
    <property type="gene ID" value="FBgn0166389"/>
</dbReference>
<dbReference type="EnsemblMetazoa" id="XM_002036542.2">
    <property type="protein sequence ID" value="XP_002036578.1"/>
    <property type="gene ID" value="LOC6612061"/>
</dbReference>
<dbReference type="GeneID" id="6612061"/>
<dbReference type="KEGG" id="dse:6612061"/>
<dbReference type="HOGENOM" id="CLU_000288_57_0_1"/>
<dbReference type="OMA" id="DHKYVEF"/>
<dbReference type="OrthoDB" id="1900at7215"/>
<dbReference type="PhylomeDB" id="B4HWV6"/>
<dbReference type="Proteomes" id="UP000001292">
    <property type="component" value="Unassembled WGS sequence"/>
</dbReference>
<dbReference type="GO" id="GO:0005654">
    <property type="term" value="C:nucleoplasm"/>
    <property type="evidence" value="ECO:0007669"/>
    <property type="project" value="UniProtKB-SubCell"/>
</dbReference>
<dbReference type="GO" id="GO:0070545">
    <property type="term" value="C:PeBoW complex"/>
    <property type="evidence" value="ECO:0000250"/>
    <property type="project" value="UniProtKB"/>
</dbReference>
<dbReference type="GO" id="GO:0030687">
    <property type="term" value="C:preribosome, large subunit precursor"/>
    <property type="evidence" value="ECO:0007669"/>
    <property type="project" value="UniProtKB-UniRule"/>
</dbReference>
<dbReference type="GO" id="GO:0043021">
    <property type="term" value="F:ribonucleoprotein complex binding"/>
    <property type="evidence" value="ECO:0007669"/>
    <property type="project" value="UniProtKB-UniRule"/>
</dbReference>
<dbReference type="GO" id="GO:0000466">
    <property type="term" value="P:maturation of 5.8S rRNA from tricistronic rRNA transcript (SSU-rRNA, 5.8S rRNA, LSU-rRNA)"/>
    <property type="evidence" value="ECO:0007669"/>
    <property type="project" value="UniProtKB-UniRule"/>
</dbReference>
<dbReference type="GO" id="GO:0000463">
    <property type="term" value="P:maturation of LSU-rRNA from tricistronic rRNA transcript (SSU-rRNA, 5.8S rRNA, LSU-rRNA)"/>
    <property type="evidence" value="ECO:0000250"/>
    <property type="project" value="UniProtKB"/>
</dbReference>
<dbReference type="CDD" id="cd00200">
    <property type="entry name" value="WD40"/>
    <property type="match status" value="1"/>
</dbReference>
<dbReference type="FunFam" id="2.130.10.10:FF:000878">
    <property type="entry name" value="Ribosome biogenesis protein WDR12 homolog"/>
    <property type="match status" value="1"/>
</dbReference>
<dbReference type="FunFam" id="2.130.10.10:FF:000989">
    <property type="entry name" value="Ribosome biogenesis protein WDR12 homolog"/>
    <property type="match status" value="1"/>
</dbReference>
<dbReference type="FunFam" id="2.130.10.10:FF:001205">
    <property type="entry name" value="Ribosome biogenesis protein WDR12 homolog"/>
    <property type="match status" value="1"/>
</dbReference>
<dbReference type="Gene3D" id="2.130.10.10">
    <property type="entry name" value="YVTN repeat-like/Quinoprotein amine dehydrogenase"/>
    <property type="match status" value="3"/>
</dbReference>
<dbReference type="HAMAP" id="MF_03029">
    <property type="entry name" value="WDR12"/>
    <property type="match status" value="1"/>
</dbReference>
<dbReference type="InterPro" id="IPR020472">
    <property type="entry name" value="G-protein_beta_WD-40_rep"/>
</dbReference>
<dbReference type="InterPro" id="IPR012972">
    <property type="entry name" value="NLE"/>
</dbReference>
<dbReference type="InterPro" id="IPR015943">
    <property type="entry name" value="WD40/YVTN_repeat-like_dom_sf"/>
</dbReference>
<dbReference type="InterPro" id="IPR019775">
    <property type="entry name" value="WD40_repeat_CS"/>
</dbReference>
<dbReference type="InterPro" id="IPR036322">
    <property type="entry name" value="WD40_repeat_dom_sf"/>
</dbReference>
<dbReference type="InterPro" id="IPR001680">
    <property type="entry name" value="WD40_rpt"/>
</dbReference>
<dbReference type="InterPro" id="IPR028599">
    <property type="entry name" value="WDR12/Ytm1"/>
</dbReference>
<dbReference type="PANTHER" id="PTHR19855:SF11">
    <property type="entry name" value="RIBOSOME BIOGENESIS PROTEIN WDR12"/>
    <property type="match status" value="1"/>
</dbReference>
<dbReference type="PANTHER" id="PTHR19855">
    <property type="entry name" value="WD40 REPEAT PROTEIN 12, 37"/>
    <property type="match status" value="1"/>
</dbReference>
<dbReference type="Pfam" id="PF08154">
    <property type="entry name" value="NLE"/>
    <property type="match status" value="1"/>
</dbReference>
<dbReference type="Pfam" id="PF00400">
    <property type="entry name" value="WD40"/>
    <property type="match status" value="7"/>
</dbReference>
<dbReference type="PRINTS" id="PR00320">
    <property type="entry name" value="GPROTEINBRPT"/>
</dbReference>
<dbReference type="SMART" id="SM00320">
    <property type="entry name" value="WD40"/>
    <property type="match status" value="7"/>
</dbReference>
<dbReference type="SUPFAM" id="SSF50978">
    <property type="entry name" value="WD40 repeat-like"/>
    <property type="match status" value="1"/>
</dbReference>
<dbReference type="PROSITE" id="PS00678">
    <property type="entry name" value="WD_REPEATS_1"/>
    <property type="match status" value="1"/>
</dbReference>
<dbReference type="PROSITE" id="PS50082">
    <property type="entry name" value="WD_REPEATS_2"/>
    <property type="match status" value="4"/>
</dbReference>
<dbReference type="PROSITE" id="PS50294">
    <property type="entry name" value="WD_REPEATS_REGION"/>
    <property type="match status" value="1"/>
</dbReference>
<comment type="function">
    <text evidence="1">Required for maturation of ribosomal RNAs and formation of the large ribosomal subunit.</text>
</comment>
<comment type="subcellular location">
    <subcellularLocation>
        <location evidence="1">Nucleus</location>
        <location evidence="1">Nucleolus</location>
    </subcellularLocation>
    <subcellularLocation>
        <location evidence="1">Nucleus</location>
        <location evidence="1">Nucleoplasm</location>
    </subcellularLocation>
</comment>
<comment type="similarity">
    <text evidence="1">Belongs to the WD repeat WDR12/YTM1 family.</text>
</comment>
<organism>
    <name type="scientific">Drosophila sechellia</name>
    <name type="common">Fruit fly</name>
    <dbReference type="NCBI Taxonomy" id="7238"/>
    <lineage>
        <taxon>Eukaryota</taxon>
        <taxon>Metazoa</taxon>
        <taxon>Ecdysozoa</taxon>
        <taxon>Arthropoda</taxon>
        <taxon>Hexapoda</taxon>
        <taxon>Insecta</taxon>
        <taxon>Pterygota</taxon>
        <taxon>Neoptera</taxon>
        <taxon>Endopterygota</taxon>
        <taxon>Diptera</taxon>
        <taxon>Brachycera</taxon>
        <taxon>Muscomorpha</taxon>
        <taxon>Ephydroidea</taxon>
        <taxon>Drosophilidae</taxon>
        <taxon>Drosophila</taxon>
        <taxon>Sophophora</taxon>
    </lineage>
</organism>
<protein>
    <recommendedName>
        <fullName evidence="1">Ribosome biogenesis protein WDR12 homolog</fullName>
    </recommendedName>
</protein>
<feature type="chain" id="PRO_0000369562" description="Ribosome biogenesis protein WDR12 homolog">
    <location>
        <begin position="1"/>
        <end position="420"/>
    </location>
</feature>
<feature type="repeat" description="WD 1">
    <location>
        <begin position="104"/>
        <end position="142"/>
    </location>
</feature>
<feature type="repeat" description="WD 2">
    <location>
        <begin position="143"/>
        <end position="185"/>
    </location>
</feature>
<feature type="repeat" description="WD 3">
    <location>
        <begin position="192"/>
        <end position="231"/>
    </location>
</feature>
<feature type="repeat" description="WD 4">
    <location>
        <begin position="250"/>
        <end position="288"/>
    </location>
</feature>
<feature type="repeat" description="WD 5">
    <location>
        <begin position="290"/>
        <end position="329"/>
    </location>
</feature>
<feature type="repeat" description="WD 6">
    <location>
        <begin position="335"/>
        <end position="375"/>
    </location>
</feature>
<feature type="repeat" description="WD 7">
    <location>
        <begin position="379"/>
        <end position="417"/>
    </location>
</feature>
<feature type="region of interest" description="Ubiquitin-like (UBL) domain" evidence="1">
    <location>
        <begin position="10"/>
        <end position="92"/>
    </location>
</feature>
<keyword id="KW-0539">Nucleus</keyword>
<keyword id="KW-1185">Reference proteome</keyword>
<keyword id="KW-0677">Repeat</keyword>
<keyword id="KW-0690">Ribosome biogenesis</keyword>
<keyword id="KW-0698">rRNA processing</keyword>
<keyword id="KW-0853">WD repeat</keyword>
<gene>
    <name type="ORF">GM11446</name>
</gene>
<accession>B4HWV6</accession>
<evidence type="ECO:0000255" key="1">
    <source>
        <dbReference type="HAMAP-Rule" id="MF_03029"/>
    </source>
</evidence>
<reference key="1">
    <citation type="journal article" date="2007" name="Nature">
        <title>Evolution of genes and genomes on the Drosophila phylogeny.</title>
        <authorList>
            <consortium name="Drosophila 12 genomes consortium"/>
        </authorList>
    </citation>
    <scope>NUCLEOTIDE SEQUENCE [LARGE SCALE GENOMIC DNA]</scope>
    <source>
        <strain>Rob3c / Tucson 14021-0248.25</strain>
    </source>
</reference>
<name>WDR12_DROSE</name>
<proteinExistence type="inferred from homology"/>